<accession>Q06GP2</accession>
<protein>
    <recommendedName>
        <fullName evidence="1">Cytochrome b6-f complex subunit 6</fullName>
    </recommendedName>
    <alternativeName>
        <fullName evidence="1">Cytochrome b6-f complex subunit PetL</fullName>
    </alternativeName>
    <alternativeName>
        <fullName evidence="1">Cytochrome b6-f complex subunit VI</fullName>
    </alternativeName>
</protein>
<feature type="chain" id="PRO_0000275532" description="Cytochrome b6-f complex subunit 6">
    <location>
        <begin position="1"/>
        <end position="31"/>
    </location>
</feature>
<feature type="transmembrane region" description="Helical" evidence="1">
    <location>
        <begin position="4"/>
        <end position="24"/>
    </location>
</feature>
<name>PETL_PIPCE</name>
<comment type="function">
    <text evidence="1">Component of the cytochrome b6-f complex, which mediates electron transfer between photosystem II (PSII) and photosystem I (PSI), cyclic electron flow around PSI, and state transitions. PetL is important for photoautotrophic growth as well as for electron transfer efficiency and stability of the cytochrome b6-f complex.</text>
</comment>
<comment type="subunit">
    <text evidence="1">The 4 large subunits of the cytochrome b6-f complex are cytochrome b6, subunit IV (17 kDa polypeptide, PetD), cytochrome f and the Rieske protein, while the 4 small subunits are PetG, PetL, PetM and PetN. The complex functions as a dimer.</text>
</comment>
<comment type="subcellular location">
    <subcellularLocation>
        <location evidence="1">Plastid</location>
        <location evidence="1">Chloroplast thylakoid membrane</location>
        <topology evidence="1">Single-pass membrane protein</topology>
    </subcellularLocation>
</comment>
<comment type="similarity">
    <text evidence="1">Belongs to the PetL family.</text>
</comment>
<organism>
    <name type="scientific">Piper cenocladum</name>
    <name type="common">Ant piper</name>
    <dbReference type="NCBI Taxonomy" id="398741"/>
    <lineage>
        <taxon>Eukaryota</taxon>
        <taxon>Viridiplantae</taxon>
        <taxon>Streptophyta</taxon>
        <taxon>Embryophyta</taxon>
        <taxon>Tracheophyta</taxon>
        <taxon>Spermatophyta</taxon>
        <taxon>Magnoliopsida</taxon>
        <taxon>Magnoliidae</taxon>
        <taxon>Piperales</taxon>
        <taxon>Piperaceae</taxon>
        <taxon>Piper</taxon>
    </lineage>
</organism>
<reference key="1">
    <citation type="journal article" date="2006" name="BMC Evol. Biol.">
        <title>Complete plastid genome sequences of Drimys, Liriodendron, and Piper: implications for the phylogenetic relationships of magnoliids.</title>
        <authorList>
            <person name="Cai Z."/>
            <person name="Penaflor C."/>
            <person name="Kuehl J.V."/>
            <person name="Leebens-Mack J."/>
            <person name="Carlson J.E."/>
            <person name="dePamphilis C.W."/>
            <person name="Boore J.L."/>
            <person name="Jansen R.K."/>
        </authorList>
    </citation>
    <scope>NUCLEOTIDE SEQUENCE [LARGE SCALE GENOMIC DNA]</scope>
</reference>
<keyword id="KW-0150">Chloroplast</keyword>
<keyword id="KW-0249">Electron transport</keyword>
<keyword id="KW-0472">Membrane</keyword>
<keyword id="KW-0602">Photosynthesis</keyword>
<keyword id="KW-0934">Plastid</keyword>
<keyword id="KW-0793">Thylakoid</keyword>
<keyword id="KW-0812">Transmembrane</keyword>
<keyword id="KW-1133">Transmembrane helix</keyword>
<keyword id="KW-0813">Transport</keyword>
<dbReference type="EMBL" id="DQ887677">
    <property type="protein sequence ID" value="ABI14490.1"/>
    <property type="molecule type" value="Genomic_DNA"/>
</dbReference>
<dbReference type="RefSeq" id="YP_784491.1">
    <property type="nucleotide sequence ID" value="NC_008457.1"/>
</dbReference>
<dbReference type="SMR" id="Q06GP2"/>
<dbReference type="GeneID" id="4363674"/>
<dbReference type="GO" id="GO:0009535">
    <property type="term" value="C:chloroplast thylakoid membrane"/>
    <property type="evidence" value="ECO:0007669"/>
    <property type="project" value="UniProtKB-SubCell"/>
</dbReference>
<dbReference type="GO" id="GO:0009512">
    <property type="term" value="C:cytochrome b6f complex"/>
    <property type="evidence" value="ECO:0007669"/>
    <property type="project" value="InterPro"/>
</dbReference>
<dbReference type="GO" id="GO:0045158">
    <property type="term" value="F:electron transporter, transferring electrons within cytochrome b6/f complex of photosystem II activity"/>
    <property type="evidence" value="ECO:0007669"/>
    <property type="project" value="UniProtKB-UniRule"/>
</dbReference>
<dbReference type="GO" id="GO:0015979">
    <property type="term" value="P:photosynthesis"/>
    <property type="evidence" value="ECO:0007669"/>
    <property type="project" value="UniProtKB-KW"/>
</dbReference>
<dbReference type="HAMAP" id="MF_00433">
    <property type="entry name" value="Cytb6_f_PetL"/>
    <property type="match status" value="1"/>
</dbReference>
<dbReference type="InterPro" id="IPR007802">
    <property type="entry name" value="Cyt_b6/f_cplx_su6"/>
</dbReference>
<dbReference type="PANTHER" id="PTHR37266">
    <property type="entry name" value="CYTOCHROME B6-F COMPLEX SUBUNIT 6"/>
    <property type="match status" value="1"/>
</dbReference>
<dbReference type="PANTHER" id="PTHR37266:SF1">
    <property type="entry name" value="CYTOCHROME B6-F COMPLEX SUBUNIT 6"/>
    <property type="match status" value="1"/>
</dbReference>
<dbReference type="Pfam" id="PF05115">
    <property type="entry name" value="PetL"/>
    <property type="match status" value="1"/>
</dbReference>
<geneLocation type="chloroplast"/>
<gene>
    <name evidence="1" type="primary">petL</name>
</gene>
<sequence length="31" mass="3339">MPTITSYFGFLLAALTITSALLIGLSKIRLI</sequence>
<evidence type="ECO:0000255" key="1">
    <source>
        <dbReference type="HAMAP-Rule" id="MF_00433"/>
    </source>
</evidence>
<proteinExistence type="inferred from homology"/>